<accession>A8AVM1</accession>
<gene>
    <name evidence="1" type="primary">murC</name>
    <name type="ordered locus">SGO_0515</name>
</gene>
<proteinExistence type="inferred from homology"/>
<keyword id="KW-0067">ATP-binding</keyword>
<keyword id="KW-0131">Cell cycle</keyword>
<keyword id="KW-0132">Cell division</keyword>
<keyword id="KW-0133">Cell shape</keyword>
<keyword id="KW-0961">Cell wall biogenesis/degradation</keyword>
<keyword id="KW-0963">Cytoplasm</keyword>
<keyword id="KW-0436">Ligase</keyword>
<keyword id="KW-0547">Nucleotide-binding</keyword>
<keyword id="KW-0573">Peptidoglycan synthesis</keyword>
<keyword id="KW-1185">Reference proteome</keyword>
<name>MURC_STRGC</name>
<comment type="function">
    <text evidence="1">Cell wall formation.</text>
</comment>
<comment type="catalytic activity">
    <reaction evidence="1">
        <text>UDP-N-acetyl-alpha-D-muramate + L-alanine + ATP = UDP-N-acetyl-alpha-D-muramoyl-L-alanine + ADP + phosphate + H(+)</text>
        <dbReference type="Rhea" id="RHEA:23372"/>
        <dbReference type="ChEBI" id="CHEBI:15378"/>
        <dbReference type="ChEBI" id="CHEBI:30616"/>
        <dbReference type="ChEBI" id="CHEBI:43474"/>
        <dbReference type="ChEBI" id="CHEBI:57972"/>
        <dbReference type="ChEBI" id="CHEBI:70757"/>
        <dbReference type="ChEBI" id="CHEBI:83898"/>
        <dbReference type="ChEBI" id="CHEBI:456216"/>
        <dbReference type="EC" id="6.3.2.8"/>
    </reaction>
</comment>
<comment type="pathway">
    <text evidence="1">Cell wall biogenesis; peptidoglycan biosynthesis.</text>
</comment>
<comment type="subcellular location">
    <subcellularLocation>
        <location evidence="1">Cytoplasm</location>
    </subcellularLocation>
</comment>
<comment type="similarity">
    <text evidence="1">Belongs to the MurCDEF family.</text>
</comment>
<feature type="chain" id="PRO_1000074760" description="UDP-N-acetylmuramate--L-alanine ligase">
    <location>
        <begin position="1"/>
        <end position="443"/>
    </location>
</feature>
<feature type="binding site" evidence="1">
    <location>
        <begin position="110"/>
        <end position="116"/>
    </location>
    <ligand>
        <name>ATP</name>
        <dbReference type="ChEBI" id="CHEBI:30616"/>
    </ligand>
</feature>
<evidence type="ECO:0000255" key="1">
    <source>
        <dbReference type="HAMAP-Rule" id="MF_00046"/>
    </source>
</evidence>
<organism>
    <name type="scientific">Streptococcus gordonii (strain Challis / ATCC 35105 / BCRC 15272 / CH1 / DL1 / V288)</name>
    <dbReference type="NCBI Taxonomy" id="467705"/>
    <lineage>
        <taxon>Bacteria</taxon>
        <taxon>Bacillati</taxon>
        <taxon>Bacillota</taxon>
        <taxon>Bacilli</taxon>
        <taxon>Lactobacillales</taxon>
        <taxon>Streptococcaceae</taxon>
        <taxon>Streptococcus</taxon>
    </lineage>
</organism>
<dbReference type="EC" id="6.3.2.8" evidence="1"/>
<dbReference type="EMBL" id="CP000725">
    <property type="protein sequence ID" value="ABV10438.1"/>
    <property type="molecule type" value="Genomic_DNA"/>
</dbReference>
<dbReference type="RefSeq" id="WP_012000021.1">
    <property type="nucleotide sequence ID" value="NC_009785.1"/>
</dbReference>
<dbReference type="SMR" id="A8AVM1"/>
<dbReference type="STRING" id="467705.SGO_0515"/>
<dbReference type="KEGG" id="sgo:SGO_0515"/>
<dbReference type="eggNOG" id="COG0773">
    <property type="taxonomic scope" value="Bacteria"/>
</dbReference>
<dbReference type="HOGENOM" id="CLU_028104_1_0_9"/>
<dbReference type="UniPathway" id="UPA00219"/>
<dbReference type="Proteomes" id="UP000001131">
    <property type="component" value="Chromosome"/>
</dbReference>
<dbReference type="GO" id="GO:0005737">
    <property type="term" value="C:cytoplasm"/>
    <property type="evidence" value="ECO:0007669"/>
    <property type="project" value="UniProtKB-SubCell"/>
</dbReference>
<dbReference type="GO" id="GO:0005524">
    <property type="term" value="F:ATP binding"/>
    <property type="evidence" value="ECO:0007669"/>
    <property type="project" value="UniProtKB-UniRule"/>
</dbReference>
<dbReference type="GO" id="GO:0008763">
    <property type="term" value="F:UDP-N-acetylmuramate-L-alanine ligase activity"/>
    <property type="evidence" value="ECO:0007669"/>
    <property type="project" value="UniProtKB-UniRule"/>
</dbReference>
<dbReference type="GO" id="GO:0051301">
    <property type="term" value="P:cell division"/>
    <property type="evidence" value="ECO:0007669"/>
    <property type="project" value="UniProtKB-KW"/>
</dbReference>
<dbReference type="GO" id="GO:0071555">
    <property type="term" value="P:cell wall organization"/>
    <property type="evidence" value="ECO:0007669"/>
    <property type="project" value="UniProtKB-KW"/>
</dbReference>
<dbReference type="GO" id="GO:0009252">
    <property type="term" value="P:peptidoglycan biosynthetic process"/>
    <property type="evidence" value="ECO:0007669"/>
    <property type="project" value="UniProtKB-UniRule"/>
</dbReference>
<dbReference type="GO" id="GO:0008360">
    <property type="term" value="P:regulation of cell shape"/>
    <property type="evidence" value="ECO:0007669"/>
    <property type="project" value="UniProtKB-KW"/>
</dbReference>
<dbReference type="Gene3D" id="3.90.190.20">
    <property type="entry name" value="Mur ligase, C-terminal domain"/>
    <property type="match status" value="1"/>
</dbReference>
<dbReference type="Gene3D" id="3.40.1190.10">
    <property type="entry name" value="Mur-like, catalytic domain"/>
    <property type="match status" value="1"/>
</dbReference>
<dbReference type="Gene3D" id="3.40.50.720">
    <property type="entry name" value="NAD(P)-binding Rossmann-like Domain"/>
    <property type="match status" value="1"/>
</dbReference>
<dbReference type="HAMAP" id="MF_00046">
    <property type="entry name" value="MurC"/>
    <property type="match status" value="1"/>
</dbReference>
<dbReference type="InterPro" id="IPR036565">
    <property type="entry name" value="Mur-like_cat_sf"/>
</dbReference>
<dbReference type="InterPro" id="IPR004101">
    <property type="entry name" value="Mur_ligase_C"/>
</dbReference>
<dbReference type="InterPro" id="IPR036615">
    <property type="entry name" value="Mur_ligase_C_dom_sf"/>
</dbReference>
<dbReference type="InterPro" id="IPR013221">
    <property type="entry name" value="Mur_ligase_cen"/>
</dbReference>
<dbReference type="InterPro" id="IPR000713">
    <property type="entry name" value="Mur_ligase_N"/>
</dbReference>
<dbReference type="InterPro" id="IPR050061">
    <property type="entry name" value="MurCDEF_pg_biosynth"/>
</dbReference>
<dbReference type="InterPro" id="IPR005758">
    <property type="entry name" value="UDP-N-AcMur_Ala_ligase_MurC"/>
</dbReference>
<dbReference type="NCBIfam" id="TIGR01082">
    <property type="entry name" value="murC"/>
    <property type="match status" value="1"/>
</dbReference>
<dbReference type="PANTHER" id="PTHR43445:SF3">
    <property type="entry name" value="UDP-N-ACETYLMURAMATE--L-ALANINE LIGASE"/>
    <property type="match status" value="1"/>
</dbReference>
<dbReference type="PANTHER" id="PTHR43445">
    <property type="entry name" value="UDP-N-ACETYLMURAMATE--L-ALANINE LIGASE-RELATED"/>
    <property type="match status" value="1"/>
</dbReference>
<dbReference type="Pfam" id="PF01225">
    <property type="entry name" value="Mur_ligase"/>
    <property type="match status" value="1"/>
</dbReference>
<dbReference type="Pfam" id="PF02875">
    <property type="entry name" value="Mur_ligase_C"/>
    <property type="match status" value="1"/>
</dbReference>
<dbReference type="Pfam" id="PF08245">
    <property type="entry name" value="Mur_ligase_M"/>
    <property type="match status" value="1"/>
</dbReference>
<dbReference type="SUPFAM" id="SSF51984">
    <property type="entry name" value="MurCD N-terminal domain"/>
    <property type="match status" value="1"/>
</dbReference>
<dbReference type="SUPFAM" id="SSF53623">
    <property type="entry name" value="MurD-like peptide ligases, catalytic domain"/>
    <property type="match status" value="1"/>
</dbReference>
<dbReference type="SUPFAM" id="SSF53244">
    <property type="entry name" value="MurD-like peptide ligases, peptide-binding domain"/>
    <property type="match status" value="1"/>
</dbReference>
<reference key="1">
    <citation type="journal article" date="2007" name="J. Bacteriol.">
        <title>Genome-wide transcriptional changes in Streptococcus gordonii in response to competence signaling peptide.</title>
        <authorList>
            <person name="Vickerman M.M."/>
            <person name="Iobst S."/>
            <person name="Jesionowski A.M."/>
            <person name="Gill S.R."/>
        </authorList>
    </citation>
    <scope>NUCLEOTIDE SEQUENCE [LARGE SCALE GENOMIC DNA]</scope>
    <source>
        <strain>Challis / ATCC 35105 / BCRC 15272 / CH1 / DL1 / V288</strain>
    </source>
</reference>
<protein>
    <recommendedName>
        <fullName evidence="1">UDP-N-acetylmuramate--L-alanine ligase</fullName>
        <ecNumber evidence="1">6.3.2.8</ecNumber>
    </recommendedName>
    <alternativeName>
        <fullName evidence="1">UDP-N-acetylmuramoyl-L-alanine synthetase</fullName>
    </alternativeName>
</protein>
<sequence length="443" mass="49867">MTKIYHFIGIKGSGMSALALMLHQMGHKVQGSDVDKYYFTQRGLEQAGIKILPFDAKNIQADYEIIAGNAFRPDNNVEIAYANEHGISYKRYHEFLGSFMRDFVSFGVAGAHGKTSTTGILSHVLSNITDTSYLIGDGTGRGSAGAKYFVFESDEYERHFMPYHPEYSIITNIDFDHPDYFTSLEDVFNAFNDYAKQITKGLFIYGEDEQLRRITSEAPIYYYGFEKGNDFVAHDLLRSTTGSTFKVSYRGQELGEFHIPTFGRHNIMNATAVIGLLYVSGFDLNLVREHLKTFAGVKRRFTEKVVNGTVIIDDFAHHPTEIIATLDAARQKYPSKEIVAIFQPHTFTRTIALLDEFADALNQADAVYLAQIYGSAREVDHGDVKVEDLAEKIVKRVQVVSVDNVSPLLDHDNAVYVFMGAGDIQTYEYSFERLLSNLTSNVQ</sequence>